<protein>
    <recommendedName>
        <fullName evidence="1">GTPase Obg</fullName>
        <ecNumber evidence="1">3.6.5.-</ecNumber>
    </recommendedName>
    <alternativeName>
        <fullName evidence="1">GTP-binding protein Obg</fullName>
    </alternativeName>
</protein>
<accession>Q6NFV7</accession>
<sequence length="508" mass="54837">MARFVDRVVLHLEAGDGGNGCASVHREKFKPLGGPDGGNGGHGGDIILTVSPQAHTLLDLHYRPHLKAQRGANGAGDHRNGARGQDLVLEVPAGTVVMSESGETLADLTSPGMTFIAAKGGFGGLGNAALASAARKAPGFALKGEPGEQHDVILELKSMADIGLVGFPSAGKSSLISVMSAAKPKIGDYPFTTLQPNLGVVDMGNDAFTIADVPGLIPGASQGKGLGLDFLRHIERTAVLAHVVDAATLEPGRDPISDIEALEEELAAYQSALDEDTSLGDLRERARIVILNKADIPDALELAEFLKEDIEEKFGWPVFIISAVARKGLDPLKYAMLDLVQQSRKKRPKQKVEERIVVRPQAVDARKKNKDFEILADPQVENGYLVVGEKPERWIIQTDFENDEAVGYLADRLARMGVEDALWKKGARAGCTVTIGEVSFEWEPTTAAGVEVQMSGRGTDMRLERNTRVSAQERKRASQVRRGLIDEYDFGDDQKVTRESANRDRWQG</sequence>
<comment type="function">
    <text evidence="1">An essential GTPase which binds GTP, GDP and possibly (p)ppGpp with moderate affinity, with high nucleotide exchange rates and a fairly low GTP hydrolysis rate. Plays a role in control of the cell cycle, stress response, ribosome biogenesis and in those bacteria that undergo differentiation, in morphogenesis control.</text>
</comment>
<comment type="cofactor">
    <cofactor evidence="1">
        <name>Mg(2+)</name>
        <dbReference type="ChEBI" id="CHEBI:18420"/>
    </cofactor>
</comment>
<comment type="subunit">
    <text evidence="1">Monomer.</text>
</comment>
<comment type="subcellular location">
    <subcellularLocation>
        <location evidence="1">Cytoplasm</location>
    </subcellularLocation>
</comment>
<comment type="similarity">
    <text evidence="1">Belongs to the TRAFAC class OBG-HflX-like GTPase superfamily. OBG GTPase family.</text>
</comment>
<organism>
    <name type="scientific">Corynebacterium diphtheriae (strain ATCC 700971 / NCTC 13129 / Biotype gravis)</name>
    <dbReference type="NCBI Taxonomy" id="257309"/>
    <lineage>
        <taxon>Bacteria</taxon>
        <taxon>Bacillati</taxon>
        <taxon>Actinomycetota</taxon>
        <taxon>Actinomycetes</taxon>
        <taxon>Mycobacteriales</taxon>
        <taxon>Corynebacteriaceae</taxon>
        <taxon>Corynebacterium</taxon>
    </lineage>
</organism>
<gene>
    <name evidence="1" type="primary">obg</name>
    <name type="ordered locus">DIP1779</name>
</gene>
<keyword id="KW-0963">Cytoplasm</keyword>
<keyword id="KW-0342">GTP-binding</keyword>
<keyword id="KW-0378">Hydrolase</keyword>
<keyword id="KW-0460">Magnesium</keyword>
<keyword id="KW-0479">Metal-binding</keyword>
<keyword id="KW-0547">Nucleotide-binding</keyword>
<keyword id="KW-1185">Reference proteome</keyword>
<proteinExistence type="inferred from homology"/>
<feature type="chain" id="PRO_0000385858" description="GTPase Obg">
    <location>
        <begin position="1"/>
        <end position="508"/>
    </location>
</feature>
<feature type="domain" description="Obg" evidence="3">
    <location>
        <begin position="2"/>
        <end position="159"/>
    </location>
</feature>
<feature type="domain" description="OBG-type G" evidence="1">
    <location>
        <begin position="160"/>
        <end position="341"/>
    </location>
</feature>
<feature type="domain" description="OCT" evidence="2">
    <location>
        <begin position="364"/>
        <end position="444"/>
    </location>
</feature>
<feature type="binding site" evidence="1">
    <location>
        <begin position="166"/>
        <end position="173"/>
    </location>
    <ligand>
        <name>GTP</name>
        <dbReference type="ChEBI" id="CHEBI:37565"/>
    </ligand>
</feature>
<feature type="binding site" evidence="1">
    <location>
        <position position="173"/>
    </location>
    <ligand>
        <name>Mg(2+)</name>
        <dbReference type="ChEBI" id="CHEBI:18420"/>
    </ligand>
</feature>
<feature type="binding site" evidence="1">
    <location>
        <begin position="191"/>
        <end position="195"/>
    </location>
    <ligand>
        <name>GTP</name>
        <dbReference type="ChEBI" id="CHEBI:37565"/>
    </ligand>
</feature>
<feature type="binding site" evidence="1">
    <location>
        <position position="193"/>
    </location>
    <ligand>
        <name>Mg(2+)</name>
        <dbReference type="ChEBI" id="CHEBI:18420"/>
    </ligand>
</feature>
<feature type="binding site" evidence="1">
    <location>
        <begin position="212"/>
        <end position="215"/>
    </location>
    <ligand>
        <name>GTP</name>
        <dbReference type="ChEBI" id="CHEBI:37565"/>
    </ligand>
</feature>
<feature type="binding site" evidence="1">
    <location>
        <begin position="292"/>
        <end position="295"/>
    </location>
    <ligand>
        <name>GTP</name>
        <dbReference type="ChEBI" id="CHEBI:37565"/>
    </ligand>
</feature>
<feature type="binding site" evidence="1">
    <location>
        <begin position="322"/>
        <end position="324"/>
    </location>
    <ligand>
        <name>GTP</name>
        <dbReference type="ChEBI" id="CHEBI:37565"/>
    </ligand>
</feature>
<reference key="1">
    <citation type="journal article" date="2003" name="Nucleic Acids Res.">
        <title>The complete genome sequence and analysis of Corynebacterium diphtheriae NCTC13129.</title>
        <authorList>
            <person name="Cerdeno-Tarraga A.-M."/>
            <person name="Efstratiou A."/>
            <person name="Dover L.G."/>
            <person name="Holden M.T.G."/>
            <person name="Pallen M.J."/>
            <person name="Bentley S.D."/>
            <person name="Besra G.S."/>
            <person name="Churcher C.M."/>
            <person name="James K.D."/>
            <person name="De Zoysa A."/>
            <person name="Chillingworth T."/>
            <person name="Cronin A."/>
            <person name="Dowd L."/>
            <person name="Feltwell T."/>
            <person name="Hamlin N."/>
            <person name="Holroyd S."/>
            <person name="Jagels K."/>
            <person name="Moule S."/>
            <person name="Quail M.A."/>
            <person name="Rabbinowitsch E."/>
            <person name="Rutherford K.M."/>
            <person name="Thomson N.R."/>
            <person name="Unwin L."/>
            <person name="Whitehead S."/>
            <person name="Barrell B.G."/>
            <person name="Parkhill J."/>
        </authorList>
    </citation>
    <scope>NUCLEOTIDE SEQUENCE [LARGE SCALE GENOMIC DNA]</scope>
    <source>
        <strain>ATCC 700971 / NCTC 13129 / Biotype gravis</strain>
    </source>
</reference>
<evidence type="ECO:0000255" key="1">
    <source>
        <dbReference type="HAMAP-Rule" id="MF_01454"/>
    </source>
</evidence>
<evidence type="ECO:0000255" key="2">
    <source>
        <dbReference type="PROSITE-ProRule" id="PRU01229"/>
    </source>
</evidence>
<evidence type="ECO:0000255" key="3">
    <source>
        <dbReference type="PROSITE-ProRule" id="PRU01231"/>
    </source>
</evidence>
<name>OBG_CORDI</name>
<dbReference type="EC" id="3.6.5.-" evidence="1"/>
<dbReference type="EMBL" id="BX248359">
    <property type="protein sequence ID" value="CAE50309.1"/>
    <property type="molecule type" value="Genomic_DNA"/>
</dbReference>
<dbReference type="SMR" id="Q6NFV7"/>
<dbReference type="STRING" id="257309.DIP1779"/>
<dbReference type="KEGG" id="cdi:DIP1779"/>
<dbReference type="HOGENOM" id="CLU_011747_0_0_11"/>
<dbReference type="Proteomes" id="UP000002198">
    <property type="component" value="Chromosome"/>
</dbReference>
<dbReference type="GO" id="GO:0005737">
    <property type="term" value="C:cytoplasm"/>
    <property type="evidence" value="ECO:0007669"/>
    <property type="project" value="UniProtKB-SubCell"/>
</dbReference>
<dbReference type="GO" id="GO:0005525">
    <property type="term" value="F:GTP binding"/>
    <property type="evidence" value="ECO:0007669"/>
    <property type="project" value="UniProtKB-UniRule"/>
</dbReference>
<dbReference type="GO" id="GO:0003924">
    <property type="term" value="F:GTPase activity"/>
    <property type="evidence" value="ECO:0007669"/>
    <property type="project" value="UniProtKB-UniRule"/>
</dbReference>
<dbReference type="GO" id="GO:0000287">
    <property type="term" value="F:magnesium ion binding"/>
    <property type="evidence" value="ECO:0007669"/>
    <property type="project" value="InterPro"/>
</dbReference>
<dbReference type="GO" id="GO:0042254">
    <property type="term" value="P:ribosome biogenesis"/>
    <property type="evidence" value="ECO:0007669"/>
    <property type="project" value="UniProtKB-UniRule"/>
</dbReference>
<dbReference type="CDD" id="cd01898">
    <property type="entry name" value="Obg"/>
    <property type="match status" value="1"/>
</dbReference>
<dbReference type="FunFam" id="2.70.210.12:FF:000001">
    <property type="entry name" value="GTPase Obg"/>
    <property type="match status" value="1"/>
</dbReference>
<dbReference type="Gene3D" id="3.30.300.350">
    <property type="entry name" value="GTP-binding protein OBG, C-terminal domain"/>
    <property type="match status" value="1"/>
</dbReference>
<dbReference type="Gene3D" id="2.70.210.12">
    <property type="entry name" value="GTP1/OBG domain"/>
    <property type="match status" value="1"/>
</dbReference>
<dbReference type="Gene3D" id="3.40.50.300">
    <property type="entry name" value="P-loop containing nucleotide triphosphate hydrolases"/>
    <property type="match status" value="1"/>
</dbReference>
<dbReference type="HAMAP" id="MF_01454">
    <property type="entry name" value="GTPase_Obg"/>
    <property type="match status" value="1"/>
</dbReference>
<dbReference type="InterPro" id="IPR031167">
    <property type="entry name" value="G_OBG"/>
</dbReference>
<dbReference type="InterPro" id="IPR006073">
    <property type="entry name" value="GTP-bd"/>
</dbReference>
<dbReference type="InterPro" id="IPR014100">
    <property type="entry name" value="GTP-bd_Obg/CgtA"/>
</dbReference>
<dbReference type="InterPro" id="IPR036346">
    <property type="entry name" value="GTP-bd_prot_GTP1/OBG_C_sf"/>
</dbReference>
<dbReference type="InterPro" id="IPR006074">
    <property type="entry name" value="GTP1-OBG_CS"/>
</dbReference>
<dbReference type="InterPro" id="IPR006169">
    <property type="entry name" value="GTP1_OBG_dom"/>
</dbReference>
<dbReference type="InterPro" id="IPR036726">
    <property type="entry name" value="GTP1_OBG_dom_sf"/>
</dbReference>
<dbReference type="InterPro" id="IPR045086">
    <property type="entry name" value="OBG_GTPase"/>
</dbReference>
<dbReference type="InterPro" id="IPR015349">
    <property type="entry name" value="OCT_dom"/>
</dbReference>
<dbReference type="InterPro" id="IPR027417">
    <property type="entry name" value="P-loop_NTPase"/>
</dbReference>
<dbReference type="NCBIfam" id="TIGR02729">
    <property type="entry name" value="Obg_CgtA"/>
    <property type="match status" value="1"/>
</dbReference>
<dbReference type="NCBIfam" id="TIGR03595">
    <property type="entry name" value="Obg_CgtA_exten"/>
    <property type="match status" value="1"/>
</dbReference>
<dbReference type="NCBIfam" id="NF008954">
    <property type="entry name" value="PRK12296.1"/>
    <property type="match status" value="1"/>
</dbReference>
<dbReference type="NCBIfam" id="NF008955">
    <property type="entry name" value="PRK12297.1"/>
    <property type="match status" value="1"/>
</dbReference>
<dbReference type="NCBIfam" id="NF008956">
    <property type="entry name" value="PRK12299.1"/>
    <property type="match status" value="1"/>
</dbReference>
<dbReference type="PANTHER" id="PTHR11702">
    <property type="entry name" value="DEVELOPMENTALLY REGULATED GTP-BINDING PROTEIN-RELATED"/>
    <property type="match status" value="1"/>
</dbReference>
<dbReference type="PANTHER" id="PTHR11702:SF31">
    <property type="entry name" value="MITOCHONDRIAL RIBOSOME-ASSOCIATED GTPASE 2"/>
    <property type="match status" value="1"/>
</dbReference>
<dbReference type="Pfam" id="PF09269">
    <property type="entry name" value="DUF1967"/>
    <property type="match status" value="1"/>
</dbReference>
<dbReference type="Pfam" id="PF01018">
    <property type="entry name" value="GTP1_OBG"/>
    <property type="match status" value="1"/>
</dbReference>
<dbReference type="Pfam" id="PF01926">
    <property type="entry name" value="MMR_HSR1"/>
    <property type="match status" value="1"/>
</dbReference>
<dbReference type="PRINTS" id="PR00326">
    <property type="entry name" value="GTP1OBG"/>
</dbReference>
<dbReference type="SUPFAM" id="SSF102741">
    <property type="entry name" value="Obg GTP-binding protein C-terminal domain"/>
    <property type="match status" value="1"/>
</dbReference>
<dbReference type="SUPFAM" id="SSF82051">
    <property type="entry name" value="Obg GTP-binding protein N-terminal domain"/>
    <property type="match status" value="1"/>
</dbReference>
<dbReference type="SUPFAM" id="SSF52540">
    <property type="entry name" value="P-loop containing nucleoside triphosphate hydrolases"/>
    <property type="match status" value="1"/>
</dbReference>
<dbReference type="PROSITE" id="PS51710">
    <property type="entry name" value="G_OBG"/>
    <property type="match status" value="1"/>
</dbReference>
<dbReference type="PROSITE" id="PS00905">
    <property type="entry name" value="GTP1_OBG"/>
    <property type="match status" value="1"/>
</dbReference>
<dbReference type="PROSITE" id="PS51883">
    <property type="entry name" value="OBG"/>
    <property type="match status" value="1"/>
</dbReference>
<dbReference type="PROSITE" id="PS51881">
    <property type="entry name" value="OCT"/>
    <property type="match status" value="1"/>
</dbReference>